<sequence length="176" mass="19268">MNLPGPIHDFLLVFLGSGLILGGLGVVLLPNPIYSAFSLGFVLVCISLFYILLNSYFVAAAQLLIYVGAINVLIIFAVMFMNGSEYYKDFHLWTIGDGVTSVVCTGLFISLITTIPDMSWYGIIWTTKSNQILEQDLITNSQQIGVHLSTDFFLPFELVSIILLVALIGAIAVARQ</sequence>
<proteinExistence type="inferred from homology"/>
<geneLocation type="chloroplast"/>
<reference key="1">
    <citation type="journal article" date="2007" name="Plant Biotechnol. J.">
        <title>The complete nucleotide sequence of the coffee (Coffea arabica L.) chloroplast genome: organization and implications for biotechnology and phylogenetic relationships amongst angiosperms.</title>
        <authorList>
            <person name="Samson N."/>
            <person name="Bausher M.G."/>
            <person name="Lee S.-B."/>
            <person name="Jansen R.K."/>
            <person name="Daniell H."/>
        </authorList>
    </citation>
    <scope>NUCLEOTIDE SEQUENCE [LARGE SCALE GENOMIC DNA]</scope>
</reference>
<accession>A0A388</accession>
<feature type="chain" id="PRO_0000360243" description="NAD(P)H-quinone oxidoreductase subunit 6, chloroplastic">
    <location>
        <begin position="1"/>
        <end position="176"/>
    </location>
</feature>
<feature type="transmembrane region" description="Helical" evidence="2">
    <location>
        <begin position="10"/>
        <end position="30"/>
    </location>
</feature>
<feature type="transmembrane region" description="Helical" evidence="2">
    <location>
        <begin position="33"/>
        <end position="53"/>
    </location>
</feature>
<feature type="transmembrane region" description="Helical" evidence="2">
    <location>
        <begin position="61"/>
        <end position="81"/>
    </location>
</feature>
<feature type="transmembrane region" description="Helical" evidence="2">
    <location>
        <begin position="92"/>
        <end position="112"/>
    </location>
</feature>
<feature type="transmembrane region" description="Helical" evidence="2">
    <location>
        <begin position="152"/>
        <end position="172"/>
    </location>
</feature>
<organism>
    <name type="scientific">Coffea arabica</name>
    <name type="common">Arabian coffee</name>
    <dbReference type="NCBI Taxonomy" id="13443"/>
    <lineage>
        <taxon>Eukaryota</taxon>
        <taxon>Viridiplantae</taxon>
        <taxon>Streptophyta</taxon>
        <taxon>Embryophyta</taxon>
        <taxon>Tracheophyta</taxon>
        <taxon>Spermatophyta</taxon>
        <taxon>Magnoliopsida</taxon>
        <taxon>eudicotyledons</taxon>
        <taxon>Gunneridae</taxon>
        <taxon>Pentapetalae</taxon>
        <taxon>asterids</taxon>
        <taxon>lamiids</taxon>
        <taxon>Gentianales</taxon>
        <taxon>Rubiaceae</taxon>
        <taxon>Ixoroideae</taxon>
        <taxon>Gardenieae complex</taxon>
        <taxon>Bertiereae - Coffeeae clade</taxon>
        <taxon>Coffeeae</taxon>
        <taxon>Coffea</taxon>
    </lineage>
</organism>
<gene>
    <name type="primary">ndhG</name>
</gene>
<name>NU6C_COFAR</name>
<keyword id="KW-0150">Chloroplast</keyword>
<keyword id="KW-0472">Membrane</keyword>
<keyword id="KW-0520">NAD</keyword>
<keyword id="KW-0521">NADP</keyword>
<keyword id="KW-0934">Plastid</keyword>
<keyword id="KW-0618">Plastoquinone</keyword>
<keyword id="KW-0874">Quinone</keyword>
<keyword id="KW-1185">Reference proteome</keyword>
<keyword id="KW-0793">Thylakoid</keyword>
<keyword id="KW-1278">Translocase</keyword>
<keyword id="KW-0812">Transmembrane</keyword>
<keyword id="KW-1133">Transmembrane helix</keyword>
<keyword id="KW-0813">Transport</keyword>
<comment type="function">
    <text evidence="1">NDH shuttles electrons from NAD(P)H:plastoquinone, via FMN and iron-sulfur (Fe-S) centers, to quinones in the photosynthetic chain and possibly in a chloroplast respiratory chain. The immediate electron acceptor for the enzyme in this species is believed to be plastoquinone. Couples the redox reaction to proton translocation, and thus conserves the redox energy in a proton gradient (By similarity).</text>
</comment>
<comment type="catalytic activity">
    <reaction>
        <text>a plastoquinone + NADH + (n+1) H(+)(in) = a plastoquinol + NAD(+) + n H(+)(out)</text>
        <dbReference type="Rhea" id="RHEA:42608"/>
        <dbReference type="Rhea" id="RHEA-COMP:9561"/>
        <dbReference type="Rhea" id="RHEA-COMP:9562"/>
        <dbReference type="ChEBI" id="CHEBI:15378"/>
        <dbReference type="ChEBI" id="CHEBI:17757"/>
        <dbReference type="ChEBI" id="CHEBI:57540"/>
        <dbReference type="ChEBI" id="CHEBI:57945"/>
        <dbReference type="ChEBI" id="CHEBI:62192"/>
    </reaction>
</comment>
<comment type="catalytic activity">
    <reaction>
        <text>a plastoquinone + NADPH + (n+1) H(+)(in) = a plastoquinol + NADP(+) + n H(+)(out)</text>
        <dbReference type="Rhea" id="RHEA:42612"/>
        <dbReference type="Rhea" id="RHEA-COMP:9561"/>
        <dbReference type="Rhea" id="RHEA-COMP:9562"/>
        <dbReference type="ChEBI" id="CHEBI:15378"/>
        <dbReference type="ChEBI" id="CHEBI:17757"/>
        <dbReference type="ChEBI" id="CHEBI:57783"/>
        <dbReference type="ChEBI" id="CHEBI:58349"/>
        <dbReference type="ChEBI" id="CHEBI:62192"/>
    </reaction>
</comment>
<comment type="subunit">
    <text evidence="1">NDH is composed of at least 16 different subunits, 5 of which are encoded in the nucleus.</text>
</comment>
<comment type="subcellular location">
    <subcellularLocation>
        <location evidence="1">Plastid</location>
        <location evidence="1">Chloroplast thylakoid membrane</location>
        <topology evidence="1">Multi-pass membrane protein</topology>
    </subcellularLocation>
</comment>
<comment type="similarity">
    <text evidence="3">Belongs to the complex I subunit 6 family.</text>
</comment>
<evidence type="ECO:0000250" key="1"/>
<evidence type="ECO:0000255" key="2"/>
<evidence type="ECO:0000305" key="3"/>
<protein>
    <recommendedName>
        <fullName>NAD(P)H-quinone oxidoreductase subunit 6, chloroplastic</fullName>
        <ecNumber>7.1.1.-</ecNumber>
    </recommendedName>
    <alternativeName>
        <fullName>NAD(P)H dehydrogenase subunit 6</fullName>
    </alternativeName>
    <alternativeName>
        <fullName>NADH-plastoquinone oxidoreductase subunit 6</fullName>
    </alternativeName>
</protein>
<dbReference type="EC" id="7.1.1.-"/>
<dbReference type="EMBL" id="EF044213">
    <property type="protein sequence ID" value="ABJ89732.1"/>
    <property type="molecule type" value="Genomic_DNA"/>
</dbReference>
<dbReference type="RefSeq" id="YP_817535.1">
    <property type="nucleotide sequence ID" value="NC_008535.1"/>
</dbReference>
<dbReference type="SMR" id="A0A388"/>
<dbReference type="GeneID" id="4421854"/>
<dbReference type="OrthoDB" id="1893972at2759"/>
<dbReference type="Proteomes" id="UP000515148">
    <property type="component" value="Chloroplast Pltd"/>
</dbReference>
<dbReference type="GO" id="GO:0009535">
    <property type="term" value="C:chloroplast thylakoid membrane"/>
    <property type="evidence" value="ECO:0007669"/>
    <property type="project" value="UniProtKB-SubCell"/>
</dbReference>
<dbReference type="GO" id="GO:0008137">
    <property type="term" value="F:NADH dehydrogenase (ubiquinone) activity"/>
    <property type="evidence" value="ECO:0007669"/>
    <property type="project" value="InterPro"/>
</dbReference>
<dbReference type="GO" id="GO:0048038">
    <property type="term" value="F:quinone binding"/>
    <property type="evidence" value="ECO:0007669"/>
    <property type="project" value="UniProtKB-KW"/>
</dbReference>
<dbReference type="FunFam" id="1.20.120.1200:FF:000002">
    <property type="entry name" value="NAD(P)H-quinone oxidoreductase subunit 6, chloroplastic"/>
    <property type="match status" value="1"/>
</dbReference>
<dbReference type="Gene3D" id="1.20.120.1200">
    <property type="entry name" value="NADH-ubiquinone/plastoquinone oxidoreductase chain 6, subunit NuoJ"/>
    <property type="match status" value="1"/>
</dbReference>
<dbReference type="InterPro" id="IPR050290">
    <property type="entry name" value="NAD(P)H-Q_Oxidoreduct_6"/>
</dbReference>
<dbReference type="InterPro" id="IPR001457">
    <property type="entry name" value="NADH_UbQ/plastoQ_OxRdtase_su6"/>
</dbReference>
<dbReference type="InterPro" id="IPR042106">
    <property type="entry name" value="Nuo/plastoQ_OxRdtase_6_NuoJ"/>
</dbReference>
<dbReference type="PANTHER" id="PTHR48479">
    <property type="entry name" value="NAD(P)H-QUINONE OXIDOREDUCTASE SUBUNIT 6, CHLOROPLASTIC"/>
    <property type="match status" value="1"/>
</dbReference>
<dbReference type="PANTHER" id="PTHR48479:SF1">
    <property type="entry name" value="NAD(P)H-QUINONE OXIDOREDUCTASE SUBUNIT 6, CHLOROPLASTIC"/>
    <property type="match status" value="1"/>
</dbReference>
<dbReference type="Pfam" id="PF00499">
    <property type="entry name" value="Oxidored_q3"/>
    <property type="match status" value="1"/>
</dbReference>